<proteinExistence type="inferred from homology"/>
<evidence type="ECO:0000255" key="1">
    <source>
        <dbReference type="HAMAP-Rule" id="MF_00127"/>
    </source>
</evidence>
<comment type="catalytic activity">
    <reaction evidence="1">
        <text>tRNA(His) + L-histidine + ATP = L-histidyl-tRNA(His) + AMP + diphosphate + H(+)</text>
        <dbReference type="Rhea" id="RHEA:17313"/>
        <dbReference type="Rhea" id="RHEA-COMP:9665"/>
        <dbReference type="Rhea" id="RHEA-COMP:9689"/>
        <dbReference type="ChEBI" id="CHEBI:15378"/>
        <dbReference type="ChEBI" id="CHEBI:30616"/>
        <dbReference type="ChEBI" id="CHEBI:33019"/>
        <dbReference type="ChEBI" id="CHEBI:57595"/>
        <dbReference type="ChEBI" id="CHEBI:78442"/>
        <dbReference type="ChEBI" id="CHEBI:78527"/>
        <dbReference type="ChEBI" id="CHEBI:456215"/>
        <dbReference type="EC" id="6.1.1.21"/>
    </reaction>
</comment>
<comment type="subunit">
    <text evidence="1">Homodimer.</text>
</comment>
<comment type="subcellular location">
    <subcellularLocation>
        <location evidence="1">Cytoplasm</location>
    </subcellularLocation>
</comment>
<comment type="similarity">
    <text evidence="1">Belongs to the class-II aminoacyl-tRNA synthetase family.</text>
</comment>
<organism>
    <name type="scientific">Syntrophotalea carbinolica (strain DSM 2380 / NBRC 103641 / GraBd1)</name>
    <name type="common">Pelobacter carbinolicus</name>
    <dbReference type="NCBI Taxonomy" id="338963"/>
    <lineage>
        <taxon>Bacteria</taxon>
        <taxon>Pseudomonadati</taxon>
        <taxon>Thermodesulfobacteriota</taxon>
        <taxon>Desulfuromonadia</taxon>
        <taxon>Desulfuromonadales</taxon>
        <taxon>Syntrophotaleaceae</taxon>
        <taxon>Syntrophotalea</taxon>
    </lineage>
</organism>
<protein>
    <recommendedName>
        <fullName evidence="1">Histidine--tRNA ligase</fullName>
        <ecNumber evidence="1">6.1.1.21</ecNumber>
    </recommendedName>
    <alternativeName>
        <fullName evidence="1">Histidyl-tRNA synthetase</fullName>
        <shortName evidence="1">HisRS</shortName>
    </alternativeName>
</protein>
<feature type="chain" id="PRO_1000203141" description="Histidine--tRNA ligase">
    <location>
        <begin position="1"/>
        <end position="419"/>
    </location>
</feature>
<accession>Q3A5R6</accession>
<dbReference type="EC" id="6.1.1.21" evidence="1"/>
<dbReference type="EMBL" id="CP000142">
    <property type="protein sequence ID" value="ABA88291.1"/>
    <property type="molecule type" value="Genomic_DNA"/>
</dbReference>
<dbReference type="SMR" id="Q3A5R6"/>
<dbReference type="STRING" id="338963.Pcar_1041"/>
<dbReference type="KEGG" id="pca:Pcar_1041"/>
<dbReference type="eggNOG" id="COG0124">
    <property type="taxonomic scope" value="Bacteria"/>
</dbReference>
<dbReference type="HOGENOM" id="CLU_025113_1_1_7"/>
<dbReference type="OrthoDB" id="9800814at2"/>
<dbReference type="Proteomes" id="UP000002534">
    <property type="component" value="Chromosome"/>
</dbReference>
<dbReference type="GO" id="GO:0005737">
    <property type="term" value="C:cytoplasm"/>
    <property type="evidence" value="ECO:0007669"/>
    <property type="project" value="UniProtKB-SubCell"/>
</dbReference>
<dbReference type="GO" id="GO:0005524">
    <property type="term" value="F:ATP binding"/>
    <property type="evidence" value="ECO:0007669"/>
    <property type="project" value="UniProtKB-UniRule"/>
</dbReference>
<dbReference type="GO" id="GO:0004821">
    <property type="term" value="F:histidine-tRNA ligase activity"/>
    <property type="evidence" value="ECO:0007669"/>
    <property type="project" value="UniProtKB-UniRule"/>
</dbReference>
<dbReference type="GO" id="GO:0006427">
    <property type="term" value="P:histidyl-tRNA aminoacylation"/>
    <property type="evidence" value="ECO:0007669"/>
    <property type="project" value="UniProtKB-UniRule"/>
</dbReference>
<dbReference type="CDD" id="cd00773">
    <property type="entry name" value="HisRS-like_core"/>
    <property type="match status" value="1"/>
</dbReference>
<dbReference type="CDD" id="cd00859">
    <property type="entry name" value="HisRS_anticodon"/>
    <property type="match status" value="1"/>
</dbReference>
<dbReference type="FunFam" id="3.30.930.10:FF:000005">
    <property type="entry name" value="Histidine--tRNA ligase"/>
    <property type="match status" value="1"/>
</dbReference>
<dbReference type="Gene3D" id="3.40.50.800">
    <property type="entry name" value="Anticodon-binding domain"/>
    <property type="match status" value="1"/>
</dbReference>
<dbReference type="Gene3D" id="3.30.930.10">
    <property type="entry name" value="Bira Bifunctional Protein, Domain 2"/>
    <property type="match status" value="1"/>
</dbReference>
<dbReference type="HAMAP" id="MF_00127">
    <property type="entry name" value="His_tRNA_synth"/>
    <property type="match status" value="1"/>
</dbReference>
<dbReference type="InterPro" id="IPR006195">
    <property type="entry name" value="aa-tRNA-synth_II"/>
</dbReference>
<dbReference type="InterPro" id="IPR045864">
    <property type="entry name" value="aa-tRNA-synth_II/BPL/LPL"/>
</dbReference>
<dbReference type="InterPro" id="IPR004154">
    <property type="entry name" value="Anticodon-bd"/>
</dbReference>
<dbReference type="InterPro" id="IPR036621">
    <property type="entry name" value="Anticodon-bd_dom_sf"/>
</dbReference>
<dbReference type="InterPro" id="IPR015807">
    <property type="entry name" value="His-tRNA-ligase"/>
</dbReference>
<dbReference type="InterPro" id="IPR041715">
    <property type="entry name" value="HisRS-like_core"/>
</dbReference>
<dbReference type="InterPro" id="IPR004516">
    <property type="entry name" value="HisRS/HisZ"/>
</dbReference>
<dbReference type="InterPro" id="IPR033656">
    <property type="entry name" value="HisRS_anticodon"/>
</dbReference>
<dbReference type="NCBIfam" id="TIGR00442">
    <property type="entry name" value="hisS"/>
    <property type="match status" value="1"/>
</dbReference>
<dbReference type="PANTHER" id="PTHR43707:SF1">
    <property type="entry name" value="HISTIDINE--TRNA LIGASE, MITOCHONDRIAL-RELATED"/>
    <property type="match status" value="1"/>
</dbReference>
<dbReference type="PANTHER" id="PTHR43707">
    <property type="entry name" value="HISTIDYL-TRNA SYNTHETASE"/>
    <property type="match status" value="1"/>
</dbReference>
<dbReference type="Pfam" id="PF03129">
    <property type="entry name" value="HGTP_anticodon"/>
    <property type="match status" value="1"/>
</dbReference>
<dbReference type="Pfam" id="PF13393">
    <property type="entry name" value="tRNA-synt_His"/>
    <property type="match status" value="1"/>
</dbReference>
<dbReference type="PIRSF" id="PIRSF001549">
    <property type="entry name" value="His-tRNA_synth"/>
    <property type="match status" value="1"/>
</dbReference>
<dbReference type="SUPFAM" id="SSF52954">
    <property type="entry name" value="Class II aaRS ABD-related"/>
    <property type="match status" value="1"/>
</dbReference>
<dbReference type="SUPFAM" id="SSF55681">
    <property type="entry name" value="Class II aaRS and biotin synthetases"/>
    <property type="match status" value="1"/>
</dbReference>
<dbReference type="PROSITE" id="PS50862">
    <property type="entry name" value="AA_TRNA_LIGASE_II"/>
    <property type="match status" value="1"/>
</dbReference>
<reference key="1">
    <citation type="submission" date="2005-10" db="EMBL/GenBank/DDBJ databases">
        <title>Complete sequence of Pelobacter carbinolicus DSM 2380.</title>
        <authorList>
            <person name="Copeland A."/>
            <person name="Lucas S."/>
            <person name="Lapidus A."/>
            <person name="Barry K."/>
            <person name="Detter J.C."/>
            <person name="Glavina T."/>
            <person name="Hammon N."/>
            <person name="Israni S."/>
            <person name="Pitluck S."/>
            <person name="Chertkov O."/>
            <person name="Schmutz J."/>
            <person name="Larimer F."/>
            <person name="Land M."/>
            <person name="Kyrpides N."/>
            <person name="Ivanova N."/>
            <person name="Richardson P."/>
        </authorList>
    </citation>
    <scope>NUCLEOTIDE SEQUENCE [LARGE SCALE GENOMIC DNA]</scope>
    <source>
        <strain>DSM 2380 / NBRC 103641 / GraBd1</strain>
    </source>
</reference>
<name>SYH_SYNC1</name>
<sequence>MSISGIKGMNDILPSDVETWQFLEREAHRIFKLYGFAEIRVPVVEKTELFCRSIGETTDIVEKEMYTFDDRSSNSLTLRPEGTAPVMRSFIEHKLHALDPVSKLYYMGPMFRYERPQKGRYRQFHQIGAEAIGVDDPMMDAQVLAMLCHYFDAVGIDNVELHVNSLGCQECRPQYRQALTGYLESRLDKLCADCQRRYQTNPLRVLDCKVPACQEATKDAPSVLDLLCSGCNDHFAQVRQHLQELQIDYTINARMVRGLDYYTKTTFEMVTNQLGSQNAVAAGGRYDGLIKELGGPALPGIGFAMGVERLVLMKGEQQVQPPRPDVFLAALGEAAGQKAFALMYRLQRLDLRAEMAFTGKSLKAQMRRAGKLNARYVLMLGEEELASGQAQLRDMDNGSQEPIALEGIEQALLEKTRGN</sequence>
<keyword id="KW-0030">Aminoacyl-tRNA synthetase</keyword>
<keyword id="KW-0067">ATP-binding</keyword>
<keyword id="KW-0963">Cytoplasm</keyword>
<keyword id="KW-0436">Ligase</keyword>
<keyword id="KW-0547">Nucleotide-binding</keyword>
<keyword id="KW-0648">Protein biosynthesis</keyword>
<keyword id="KW-1185">Reference proteome</keyword>
<gene>
    <name evidence="1" type="primary">hisS</name>
    <name type="ordered locus">Pcar_1041</name>
</gene>